<proteinExistence type="evidence at protein level"/>
<organismHost>
    <name type="scientific">Sus scrofa</name>
    <name type="common">Pig</name>
    <dbReference type="NCBI Taxonomy" id="9823"/>
</organismHost>
<comment type="function">
    <text evidence="3 4 6">Major envelope protein present in abundant amounts in the virion envelope. Mediates virion sialic acid-dependent attachment the sialoadhesin receptor SIGLEC1. This attachment induces virion internalization into alveolar macrophages predominantly through clathrin-dependent endocytosis.</text>
</comment>
<comment type="subunit">
    <text evidence="1 4 6 7">Heterodimer with the membrane protein; disulfide-linked. This heterodimerization is required for transport to the Golgi complex (By similarity). Interacts with glycoprotein 4 (By similarity). Interacts with host SIGLEC1; this interaction plays a role in virus entry into host cell. Interacts with host B4GALT5 (PubMed:29546034).</text>
</comment>
<comment type="subcellular location">
    <subcellularLocation>
        <location evidence="5">Virion</location>
    </subcellularLocation>
    <subcellularLocation>
        <location evidence="8">Virion membrane</location>
        <topology evidence="8">Multi-pass membrane protein</topology>
    </subcellularLocation>
</comment>
<comment type="alternative products">
    <event type="alternative initiation"/>
    <isoform>
        <id>Q04569-1</id>
        <name>GP5</name>
        <name>Glycoprotein 5</name>
        <sequence type="displayed"/>
    </isoform>
    <isoform>
        <id>P0DJZ4-1</id>
        <name>ORF5a</name>
        <name>Protein ORF5a</name>
        <sequence type="external"/>
    </isoform>
</comment>
<comment type="PTM">
    <text evidence="1">N-glycosylated.</text>
</comment>
<comment type="similarity">
    <text evidence="8">Belongs to the arteriviridae GP5 protein family.</text>
</comment>
<gene>
    <name type="primary">GP5</name>
    <name type="ORF">5</name>
</gene>
<keyword id="KW-0024">Alternative initiation</keyword>
<keyword id="KW-1165">Clathrin-mediated endocytosis of virus by host</keyword>
<keyword id="KW-1015">Disulfide bond</keyword>
<keyword id="KW-0325">Glycoprotein</keyword>
<keyword id="KW-0945">Host-virus interaction</keyword>
<keyword id="KW-0472">Membrane</keyword>
<keyword id="KW-1185">Reference proteome</keyword>
<keyword id="KW-0732">Signal</keyword>
<keyword id="KW-0812">Transmembrane</keyword>
<keyword id="KW-1133">Transmembrane helix</keyword>
<keyword id="KW-1161">Viral attachment to host cell</keyword>
<keyword id="KW-0261">Viral envelope protein</keyword>
<keyword id="KW-1162">Viral penetration into host cytoplasm</keyword>
<keyword id="KW-0946">Virion</keyword>
<keyword id="KW-1164">Virus endocytosis by host</keyword>
<keyword id="KW-1160">Virus entry into host cell</keyword>
<name>GP5_PRRSL</name>
<sequence>MRCSHKLGRFLTPHSCFWWLFLLCTGLSWSFADGNGDSSTYQYIYNLTICELNGTDWLSSHFGWAVETFVLYPVATHILSLGFLTTSHFFDALGLGAVSTAGFVGGRYVLCSVYGACAFAAFVCFVIRAAKNCMACRYARTRFTNFIVDDRGRVHRWKSPIVVEKLGKAEVDGNLVTIKHVVLEGVKAQPLTRTSAEQWEA</sequence>
<organism>
    <name type="scientific">Porcine reproductive and respiratory syndrome virus (strain Lelystad)</name>
    <name type="common">PRRSV</name>
    <dbReference type="NCBI Taxonomy" id="11049"/>
    <lineage>
        <taxon>Viruses</taxon>
        <taxon>Riboviria</taxon>
        <taxon>Orthornavirae</taxon>
        <taxon>Pisuviricota</taxon>
        <taxon>Pisoniviricetes</taxon>
        <taxon>Nidovirales</taxon>
        <taxon>Arnidovirineae</taxon>
        <taxon>Arteriviridae</taxon>
        <taxon>Variarterivirinae</taxon>
        <taxon>Betaarterivirus</taxon>
        <taxon>Eurpobartevirus</taxon>
        <taxon>Betaarterivirus suid 1</taxon>
    </lineage>
</organism>
<reference key="1">
    <citation type="journal article" date="1993" name="Virology">
        <title>Lelystad virus, the causative agent of porcine epidemic abortion and respiratory syndrome (PEARS), is related to LDV and EAV.</title>
        <authorList>
            <person name="Meulenberg J.J.M."/>
            <person name="Hulst M.M."/>
            <person name="de Meijer E.J."/>
            <person name="Moonen P.L.J.M."/>
            <person name="den Besten A."/>
            <person name="de Kluyver E.P."/>
            <person name="Wensvoort G."/>
            <person name="Moormann R.J.M."/>
        </authorList>
    </citation>
    <scope>NUCLEOTIDE SEQUENCE [GENOMIC RNA]</scope>
</reference>
<reference key="2">
    <citation type="journal article" date="1993" name="Virology">
        <title>Molecular characterization of porcine reproductive and respiratory syndrome virus, a member of the arterivirus group.</title>
        <authorList>
            <person name="Conzelmann K.K."/>
            <person name="Visser N."/>
            <person name="van Woensel P."/>
            <person name="Thiel H.J."/>
        </authorList>
    </citation>
    <scope>NUCLEOTIDE SEQUENCE [GENOMIC RNA]</scope>
    <source>
        <strain>Isolate Boxmeer 10</strain>
    </source>
</reference>
<reference key="3">
    <citation type="journal article" date="2006" name="J. Virol.">
        <title>Influence of N-linked glycosylation of porcine reproductive and respiratory syndrome virus GP5 on virus infectivity, antigenicity, and ability to induce neutralizing antibodies.</title>
        <authorList>
            <person name="Ansari I.H."/>
            <person name="Kwon B."/>
            <person name="Osorio F.A."/>
            <person name="Pattnaik A.K."/>
        </authorList>
    </citation>
    <scope>CHARACTERIZATION</scope>
    <source>
        <strain>FL-12</strain>
    </source>
</reference>
<reference key="4">
    <citation type="journal article" date="1999" name="J. Gen. Virol.">
        <title>Entry of porcine reproductive and respiratory syndrome virus into porcine alveolar macrophages via receptor-mediated endocytosis.</title>
        <authorList>
            <person name="Nauwynck H.J."/>
            <person name="Duan X."/>
            <person name="Favoreel H.W."/>
            <person name="Van Oostveldt P."/>
            <person name="Pensaert M.B."/>
        </authorList>
    </citation>
    <scope>FUNCTION</scope>
</reference>
<reference key="5">
    <citation type="journal article" date="2007" name="J. Virol.">
        <title>Porcine arterivirus attachment to the macrophage-specific receptor sialoadhesin is dependent on the sialic acid-binding activity of the N-terminal immunoglobulin domain of sialoadhesin.</title>
        <authorList>
            <person name="Delputte P.L."/>
            <person name="Van Breedam W."/>
            <person name="Delrue I."/>
            <person name="Oetke C."/>
            <person name="Crocker P.R."/>
            <person name="Nauwynck H.J."/>
        </authorList>
    </citation>
    <scope>FUNCTION</scope>
    <scope>INTERACTION WITH PIG SIGLEC1</scope>
</reference>
<reference key="6">
    <citation type="journal article" date="2008" name="J. Virol. Methods">
        <title>Purification of the major envelop protein GP5 of porcine reproductive and respiratory syndrome virus (PRRSV) from native virions.</title>
        <authorList>
            <person name="Matanin B.M."/>
            <person name="Huang Y."/>
            <person name="Meng X.J."/>
            <person name="Zhang C."/>
        </authorList>
    </citation>
    <scope>SUBCELLULAR LOCATION</scope>
</reference>
<reference key="7">
    <citation type="journal article" date="2010" name="PLoS Pathog.">
        <title>The M/GP(5) glycoprotein complex of porcine reproductive and respiratory syndrome virus binds the sialoadhesin receptor in a sialic acid-dependent manner.</title>
        <authorList>
            <person name="Van Breedam W."/>
            <person name="Van Gorp H."/>
            <person name="Zhang J.Q."/>
            <person name="Crocker P.R."/>
            <person name="Delputte P.L."/>
            <person name="Nauwynck H.J."/>
        </authorList>
    </citation>
    <scope>FUNCTION</scope>
    <scope>INTERACTION WITH PIG SIGLEC1</scope>
</reference>
<reference key="8">
    <citation type="journal article" date="2018" name="Front. Cell. Infect. Microbiol.">
        <title>The immunological regulation roles of porcine beta-1, 4 Galactosyltransferase V (B4GALT5) in PRRSV Infection.</title>
        <authorList>
            <person name="Zhang L."/>
            <person name="Ren J."/>
            <person name="Shi P."/>
            <person name="Lu D."/>
            <person name="Zhao C."/>
            <person name="Su Y."/>
            <person name="Zhang L."/>
            <person name="Huang J."/>
        </authorList>
    </citation>
    <scope>INTERACTION WITH PIG B4GALT5</scope>
</reference>
<accession>Q04569</accession>
<evidence type="ECO:0000250" key="1"/>
<evidence type="ECO:0000255" key="2"/>
<evidence type="ECO:0000269" key="3">
    <source>
    </source>
</evidence>
<evidence type="ECO:0000269" key="4">
    <source>
    </source>
</evidence>
<evidence type="ECO:0000269" key="5">
    <source>
    </source>
</evidence>
<evidence type="ECO:0000269" key="6">
    <source>
    </source>
</evidence>
<evidence type="ECO:0000269" key="7">
    <source>
    </source>
</evidence>
<evidence type="ECO:0000305" key="8"/>
<protein>
    <recommendedName>
        <fullName>Glycoprotein 5</fullName>
        <shortName>Protein GP5</shortName>
    </recommendedName>
    <alternativeName>
        <fullName>G(L)</fullName>
    </alternativeName>
</protein>
<feature type="signal peptide" evidence="2">
    <location>
        <begin position="1"/>
        <end position="32"/>
    </location>
</feature>
<feature type="chain" id="PRO_0000080883" description="Glycoprotein 5">
    <location>
        <begin position="33"/>
        <end position="201"/>
    </location>
</feature>
<feature type="topological domain" description="Virion surface" evidence="2">
    <location>
        <begin position="33"/>
        <end position="63"/>
    </location>
</feature>
<feature type="transmembrane region" description="Helical" evidence="2">
    <location>
        <begin position="64"/>
        <end position="84"/>
    </location>
</feature>
<feature type="transmembrane region" description="Helical" evidence="2">
    <location>
        <begin position="109"/>
        <end position="129"/>
    </location>
</feature>
<feature type="glycosylation site" description="N-linked (GlcNAc...) asparagine; by host" evidence="2">
    <location>
        <position position="46"/>
    </location>
</feature>
<feature type="glycosylation site" description="N-linked (GlcNAc...) asparagine; by host" evidence="2">
    <location>
        <position position="53"/>
    </location>
</feature>
<feature type="disulfide bond" description="Interchain (with C-8 in membrane protein)" evidence="1">
    <location>
        <position position="24"/>
    </location>
</feature>
<feature type="sequence conflict" description="In Ref. 2; AAA47105." evidence="8" ref="2">
    <original>C</original>
    <variation>P</variation>
    <location>
        <position position="24"/>
    </location>
</feature>
<feature type="sequence conflict" description="In Ref. 2; AAA47105." evidence="8" ref="2">
    <original>A</original>
    <variation>V</variation>
    <location>
        <position position="97"/>
    </location>
</feature>
<feature type="sequence conflict" description="In Ref. 2; AAA47105." evidence="8" ref="2">
    <original>F</original>
    <variation>L</variation>
    <location>
        <position position="103"/>
    </location>
</feature>
<feature type="sequence conflict" description="In Ref. 2; AAA47105." evidence="8" ref="2">
    <original>K</original>
    <variation>R</variation>
    <location>
        <position position="158"/>
    </location>
</feature>
<dbReference type="EMBL" id="M96262">
    <property type="protein sequence ID" value="AAA46278.1"/>
    <property type="molecule type" value="Genomic_RNA"/>
</dbReference>
<dbReference type="EMBL" id="L04493">
    <property type="protein sequence ID" value="AAA47105.1"/>
    <property type="molecule type" value="Genomic_RNA"/>
</dbReference>
<dbReference type="PIR" id="E45392">
    <property type="entry name" value="E45392"/>
</dbReference>
<dbReference type="PIR" id="F36861">
    <property type="entry name" value="F36861"/>
</dbReference>
<dbReference type="GlyCosmos" id="Q04569">
    <property type="glycosylation" value="2 sites, No reported glycans"/>
</dbReference>
<dbReference type="Proteomes" id="UP000006687">
    <property type="component" value="Segment"/>
</dbReference>
<dbReference type="GO" id="GO:0016020">
    <property type="term" value="C:membrane"/>
    <property type="evidence" value="ECO:0007669"/>
    <property type="project" value="UniProtKB-KW"/>
</dbReference>
<dbReference type="GO" id="GO:0019031">
    <property type="term" value="C:viral envelope"/>
    <property type="evidence" value="ECO:0007669"/>
    <property type="project" value="UniProtKB-KW"/>
</dbReference>
<dbReference type="GO" id="GO:0055036">
    <property type="term" value="C:virion membrane"/>
    <property type="evidence" value="ECO:0007669"/>
    <property type="project" value="UniProtKB-SubCell"/>
</dbReference>
<dbReference type="GO" id="GO:0075512">
    <property type="term" value="P:clathrin-dependent endocytosis of virus by host cell"/>
    <property type="evidence" value="ECO:0007669"/>
    <property type="project" value="UniProtKB-KW"/>
</dbReference>
<dbReference type="GO" id="GO:0019062">
    <property type="term" value="P:virion attachment to host cell"/>
    <property type="evidence" value="ECO:0007669"/>
    <property type="project" value="UniProtKB-KW"/>
</dbReference>
<dbReference type="InterPro" id="IPR001332">
    <property type="entry name" value="Arteri_GP5"/>
</dbReference>
<dbReference type="Pfam" id="PF00951">
    <property type="entry name" value="Arteri_Gl"/>
    <property type="match status" value="1"/>
</dbReference>